<feature type="chain" id="PRO_0000148340" description="G antigen 2B/2C">
    <location>
        <begin position="1"/>
        <end position="116"/>
    </location>
</feature>
<feature type="region of interest" description="Disordered" evidence="1">
    <location>
        <begin position="1"/>
        <end position="116"/>
    </location>
</feature>
<feature type="compositionally biased region" description="Acidic residues" evidence="1">
    <location>
        <begin position="31"/>
        <end position="44"/>
    </location>
</feature>
<feature type="compositionally biased region" description="Acidic residues" evidence="1">
    <location>
        <begin position="86"/>
        <end position="95"/>
    </location>
</feature>
<feature type="compositionally biased region" description="Basic and acidic residues" evidence="1">
    <location>
        <begin position="102"/>
        <end position="116"/>
    </location>
</feature>
<protein>
    <recommendedName>
        <fullName>G antigen 2B/2C</fullName>
        <shortName>GAGE-2B</shortName>
        <shortName>GAGE-2C</shortName>
    </recommendedName>
    <alternativeName>
        <fullName>Cancer/testis antigen 4.2</fullName>
        <shortName>CT4.2</shortName>
    </alternativeName>
    <alternativeName>
        <fullName>G antigen 2C</fullName>
    </alternativeName>
</protein>
<evidence type="ECO:0000256" key="1">
    <source>
        <dbReference type="SAM" id="MobiDB-lite"/>
    </source>
</evidence>
<evidence type="ECO:0000269" key="2">
    <source>
    </source>
</evidence>
<evidence type="ECO:0000305" key="3"/>
<reference key="1">
    <citation type="journal article" date="1995" name="J. Exp. Med.">
        <title>A new family of genes coding for an antigen recognized by autologous cytolytic T lymphocytes on a human melanoma.</title>
        <authorList>
            <person name="van den Eynde B."/>
            <person name="Peeters O."/>
            <person name="de Backer O."/>
            <person name="Gaugler B."/>
            <person name="Lucas S."/>
            <person name="Boon T."/>
        </authorList>
    </citation>
    <scope>NUCLEOTIDE SEQUENCE [MRNA]</scope>
    <scope>TISSUE SPECIFICITY</scope>
    <source>
        <tissue>Melanoma</tissue>
    </source>
</reference>
<reference key="2">
    <citation type="journal article" date="2005" name="Nature">
        <title>The DNA sequence of the human X chromosome.</title>
        <authorList>
            <person name="Ross M.T."/>
            <person name="Grafham D.V."/>
            <person name="Coffey A.J."/>
            <person name="Scherer S."/>
            <person name="McLay K."/>
            <person name="Muzny D."/>
            <person name="Platzer M."/>
            <person name="Howell G.R."/>
            <person name="Burrows C."/>
            <person name="Bird C.P."/>
            <person name="Frankish A."/>
            <person name="Lovell F.L."/>
            <person name="Howe K.L."/>
            <person name="Ashurst J.L."/>
            <person name="Fulton R.S."/>
            <person name="Sudbrak R."/>
            <person name="Wen G."/>
            <person name="Jones M.C."/>
            <person name="Hurles M.E."/>
            <person name="Andrews T.D."/>
            <person name="Scott C.E."/>
            <person name="Searle S."/>
            <person name="Ramser J."/>
            <person name="Whittaker A."/>
            <person name="Deadman R."/>
            <person name="Carter N.P."/>
            <person name="Hunt S.E."/>
            <person name="Chen R."/>
            <person name="Cree A."/>
            <person name="Gunaratne P."/>
            <person name="Havlak P."/>
            <person name="Hodgson A."/>
            <person name="Metzker M.L."/>
            <person name="Richards S."/>
            <person name="Scott G."/>
            <person name="Steffen D."/>
            <person name="Sodergren E."/>
            <person name="Wheeler D.A."/>
            <person name="Worley K.C."/>
            <person name="Ainscough R."/>
            <person name="Ambrose K.D."/>
            <person name="Ansari-Lari M.A."/>
            <person name="Aradhya S."/>
            <person name="Ashwell R.I."/>
            <person name="Babbage A.K."/>
            <person name="Bagguley C.L."/>
            <person name="Ballabio A."/>
            <person name="Banerjee R."/>
            <person name="Barker G.E."/>
            <person name="Barlow K.F."/>
            <person name="Barrett I.P."/>
            <person name="Bates K.N."/>
            <person name="Beare D.M."/>
            <person name="Beasley H."/>
            <person name="Beasley O."/>
            <person name="Beck A."/>
            <person name="Bethel G."/>
            <person name="Blechschmidt K."/>
            <person name="Brady N."/>
            <person name="Bray-Allen S."/>
            <person name="Bridgeman A.M."/>
            <person name="Brown A.J."/>
            <person name="Brown M.J."/>
            <person name="Bonnin D."/>
            <person name="Bruford E.A."/>
            <person name="Buhay C."/>
            <person name="Burch P."/>
            <person name="Burford D."/>
            <person name="Burgess J."/>
            <person name="Burrill W."/>
            <person name="Burton J."/>
            <person name="Bye J.M."/>
            <person name="Carder C."/>
            <person name="Carrel L."/>
            <person name="Chako J."/>
            <person name="Chapman J.C."/>
            <person name="Chavez D."/>
            <person name="Chen E."/>
            <person name="Chen G."/>
            <person name="Chen Y."/>
            <person name="Chen Z."/>
            <person name="Chinault C."/>
            <person name="Ciccodicola A."/>
            <person name="Clark S.Y."/>
            <person name="Clarke G."/>
            <person name="Clee C.M."/>
            <person name="Clegg S."/>
            <person name="Clerc-Blankenburg K."/>
            <person name="Clifford K."/>
            <person name="Cobley V."/>
            <person name="Cole C.G."/>
            <person name="Conquer J.S."/>
            <person name="Corby N."/>
            <person name="Connor R.E."/>
            <person name="David R."/>
            <person name="Davies J."/>
            <person name="Davis C."/>
            <person name="Davis J."/>
            <person name="Delgado O."/>
            <person name="Deshazo D."/>
            <person name="Dhami P."/>
            <person name="Ding Y."/>
            <person name="Dinh H."/>
            <person name="Dodsworth S."/>
            <person name="Draper H."/>
            <person name="Dugan-Rocha S."/>
            <person name="Dunham A."/>
            <person name="Dunn M."/>
            <person name="Durbin K.J."/>
            <person name="Dutta I."/>
            <person name="Eades T."/>
            <person name="Ellwood M."/>
            <person name="Emery-Cohen A."/>
            <person name="Errington H."/>
            <person name="Evans K.L."/>
            <person name="Faulkner L."/>
            <person name="Francis F."/>
            <person name="Frankland J."/>
            <person name="Fraser A.E."/>
            <person name="Galgoczy P."/>
            <person name="Gilbert J."/>
            <person name="Gill R."/>
            <person name="Gloeckner G."/>
            <person name="Gregory S.G."/>
            <person name="Gribble S."/>
            <person name="Griffiths C."/>
            <person name="Grocock R."/>
            <person name="Gu Y."/>
            <person name="Gwilliam R."/>
            <person name="Hamilton C."/>
            <person name="Hart E.A."/>
            <person name="Hawes A."/>
            <person name="Heath P.D."/>
            <person name="Heitmann K."/>
            <person name="Hennig S."/>
            <person name="Hernandez J."/>
            <person name="Hinzmann B."/>
            <person name="Ho S."/>
            <person name="Hoffs M."/>
            <person name="Howden P.J."/>
            <person name="Huckle E.J."/>
            <person name="Hume J."/>
            <person name="Hunt P.J."/>
            <person name="Hunt A.R."/>
            <person name="Isherwood J."/>
            <person name="Jacob L."/>
            <person name="Johnson D."/>
            <person name="Jones S."/>
            <person name="de Jong P.J."/>
            <person name="Joseph S.S."/>
            <person name="Keenan S."/>
            <person name="Kelly S."/>
            <person name="Kershaw J.K."/>
            <person name="Khan Z."/>
            <person name="Kioschis P."/>
            <person name="Klages S."/>
            <person name="Knights A.J."/>
            <person name="Kosiura A."/>
            <person name="Kovar-Smith C."/>
            <person name="Laird G.K."/>
            <person name="Langford C."/>
            <person name="Lawlor S."/>
            <person name="Leversha M."/>
            <person name="Lewis L."/>
            <person name="Liu W."/>
            <person name="Lloyd C."/>
            <person name="Lloyd D.M."/>
            <person name="Loulseged H."/>
            <person name="Loveland J.E."/>
            <person name="Lovell J.D."/>
            <person name="Lozado R."/>
            <person name="Lu J."/>
            <person name="Lyne R."/>
            <person name="Ma J."/>
            <person name="Maheshwari M."/>
            <person name="Matthews L.H."/>
            <person name="McDowall J."/>
            <person name="McLaren S."/>
            <person name="McMurray A."/>
            <person name="Meidl P."/>
            <person name="Meitinger T."/>
            <person name="Milne S."/>
            <person name="Miner G."/>
            <person name="Mistry S.L."/>
            <person name="Morgan M."/>
            <person name="Morris S."/>
            <person name="Mueller I."/>
            <person name="Mullikin J.C."/>
            <person name="Nguyen N."/>
            <person name="Nordsiek G."/>
            <person name="Nyakatura G."/>
            <person name="O'dell C.N."/>
            <person name="Okwuonu G."/>
            <person name="Palmer S."/>
            <person name="Pandian R."/>
            <person name="Parker D."/>
            <person name="Parrish J."/>
            <person name="Pasternak S."/>
            <person name="Patel D."/>
            <person name="Pearce A.V."/>
            <person name="Pearson D.M."/>
            <person name="Pelan S.E."/>
            <person name="Perez L."/>
            <person name="Porter K.M."/>
            <person name="Ramsey Y."/>
            <person name="Reichwald K."/>
            <person name="Rhodes S."/>
            <person name="Ridler K.A."/>
            <person name="Schlessinger D."/>
            <person name="Schueler M.G."/>
            <person name="Sehra H.K."/>
            <person name="Shaw-Smith C."/>
            <person name="Shen H."/>
            <person name="Sheridan E.M."/>
            <person name="Shownkeen R."/>
            <person name="Skuce C.D."/>
            <person name="Smith M.L."/>
            <person name="Sotheran E.C."/>
            <person name="Steingruber H.E."/>
            <person name="Steward C.A."/>
            <person name="Storey R."/>
            <person name="Swann R.M."/>
            <person name="Swarbreck D."/>
            <person name="Tabor P.E."/>
            <person name="Taudien S."/>
            <person name="Taylor T."/>
            <person name="Teague B."/>
            <person name="Thomas K."/>
            <person name="Thorpe A."/>
            <person name="Timms K."/>
            <person name="Tracey A."/>
            <person name="Trevanion S."/>
            <person name="Tromans A.C."/>
            <person name="d'Urso M."/>
            <person name="Verduzco D."/>
            <person name="Villasana D."/>
            <person name="Waldron L."/>
            <person name="Wall M."/>
            <person name="Wang Q."/>
            <person name="Warren J."/>
            <person name="Warry G.L."/>
            <person name="Wei X."/>
            <person name="West A."/>
            <person name="Whitehead S.L."/>
            <person name="Whiteley M.N."/>
            <person name="Wilkinson J.E."/>
            <person name="Willey D.L."/>
            <person name="Williams G."/>
            <person name="Williams L."/>
            <person name="Williamson A."/>
            <person name="Williamson H."/>
            <person name="Wilming L."/>
            <person name="Woodmansey R.L."/>
            <person name="Wray P.W."/>
            <person name="Yen J."/>
            <person name="Zhang J."/>
            <person name="Zhou J."/>
            <person name="Zoghbi H."/>
            <person name="Zorilla S."/>
            <person name="Buck D."/>
            <person name="Reinhardt R."/>
            <person name="Poustka A."/>
            <person name="Rosenthal A."/>
            <person name="Lehrach H."/>
            <person name="Meindl A."/>
            <person name="Minx P.J."/>
            <person name="Hillier L.W."/>
            <person name="Willard H.F."/>
            <person name="Wilson R.K."/>
            <person name="Waterston R.H."/>
            <person name="Rice C.M."/>
            <person name="Vaudin M."/>
            <person name="Coulson A."/>
            <person name="Nelson D.L."/>
            <person name="Weinstock G."/>
            <person name="Sulston J.E."/>
            <person name="Durbin R.M."/>
            <person name="Hubbard T."/>
            <person name="Gibbs R.A."/>
            <person name="Beck S."/>
            <person name="Rogers J."/>
            <person name="Bentley D.R."/>
        </authorList>
    </citation>
    <scope>NUCLEOTIDE SEQUENCE [LARGE SCALE GENOMIC DNA]</scope>
</reference>
<reference key="3">
    <citation type="journal article" date="2004" name="Genome Res.">
        <title>The status, quality, and expansion of the NIH full-length cDNA project: the Mammalian Gene Collection (MGC).</title>
        <authorList>
            <consortium name="The MGC Project Team"/>
        </authorList>
    </citation>
    <scope>NUCLEOTIDE SEQUENCE [LARGE SCALE MRNA]</scope>
</reference>
<reference key="4">
    <citation type="journal article" date="2008" name="Tissue Antigens">
        <title>An overview of the GAGE cancer/testis antigen family with the inclusion of newly identified members.</title>
        <authorList>
            <person name="Gjerstorff M.F."/>
            <person name="Ditzel H.J."/>
        </authorList>
    </citation>
    <scope>GAGE FAMILY</scope>
</reference>
<accession>Q13066</accession>
<accession>C9K0W9</accession>
<accession>Q4V322</accession>
<proteinExistence type="evidence at protein level"/>
<keyword id="KW-1185">Reference proteome</keyword>
<gene>
    <name type="primary">GAGE2B</name>
    <name type="synonym">GAGE2</name>
</gene>
<gene>
    <name type="primary">GAGE2C</name>
</gene>
<name>GAG2B_HUMAN</name>
<organism>
    <name type="scientific">Homo sapiens</name>
    <name type="common">Human</name>
    <dbReference type="NCBI Taxonomy" id="9606"/>
    <lineage>
        <taxon>Eukaryota</taxon>
        <taxon>Metazoa</taxon>
        <taxon>Chordata</taxon>
        <taxon>Craniata</taxon>
        <taxon>Vertebrata</taxon>
        <taxon>Euteleostomi</taxon>
        <taxon>Mammalia</taxon>
        <taxon>Eutheria</taxon>
        <taxon>Euarchontoglires</taxon>
        <taxon>Primates</taxon>
        <taxon>Haplorrhini</taxon>
        <taxon>Catarrhini</taxon>
        <taxon>Hominidae</taxon>
        <taxon>Homo</taxon>
    </lineage>
</organism>
<dbReference type="EMBL" id="U19143">
    <property type="protein sequence ID" value="AAA82745.1"/>
    <property type="molecule type" value="mRNA"/>
</dbReference>
<dbReference type="EMBL" id="BX649339">
    <property type="protein sequence ID" value="CAI95424.1"/>
    <property type="molecule type" value="Genomic_DNA"/>
</dbReference>
<dbReference type="EMBL" id="BX649339">
    <property type="protein sequence ID" value="CAI95425.1"/>
    <property type="molecule type" value="Genomic_DNA"/>
</dbReference>
<dbReference type="EMBL" id="BC069309">
    <property type="protein sequence ID" value="AAH69309.1"/>
    <property type="molecule type" value="mRNA"/>
</dbReference>
<dbReference type="EMBL" id="BC069558">
    <property type="protein sequence ID" value="AAH69558.1"/>
    <property type="molecule type" value="mRNA"/>
</dbReference>
<dbReference type="EMBL" id="BC113926">
    <property type="protein sequence ID" value="AAI13927.1"/>
    <property type="molecule type" value="mRNA"/>
</dbReference>
<dbReference type="RefSeq" id="NP_001091881.1">
    <property type="nucleotide sequence ID" value="NM_001098411.3"/>
</dbReference>
<dbReference type="RefSeq" id="NP_001463.1">
    <property type="nucleotide sequence ID" value="NM_001472.2"/>
</dbReference>
<dbReference type="BioGRID" id="108847">
    <property type="interactions" value="3"/>
</dbReference>
<dbReference type="BioGRID" id="570105">
    <property type="interactions" value="1"/>
</dbReference>
<dbReference type="IntAct" id="Q13066">
    <property type="interactions" value="2"/>
</dbReference>
<dbReference type="iPTMnet" id="Q13066"/>
<dbReference type="PhosphoSitePlus" id="Q13066"/>
<dbReference type="BioMuta" id="HGNC:31957"/>
<dbReference type="DMDM" id="3023872"/>
<dbReference type="jPOST" id="Q13066"/>
<dbReference type="MassIVE" id="Q13066"/>
<dbReference type="PeptideAtlas" id="Q13066"/>
<dbReference type="Pumba" id="Q13066"/>
<dbReference type="TopDownProteomics" id="Q13066"/>
<dbReference type="DNASU" id="2574"/>
<dbReference type="GeneID" id="2574"/>
<dbReference type="GeneID" id="645037"/>
<dbReference type="KEGG" id="hsa:2574"/>
<dbReference type="KEGG" id="hsa:645037"/>
<dbReference type="AGR" id="HGNC:31958"/>
<dbReference type="CTD" id="2574"/>
<dbReference type="CTD" id="645037"/>
<dbReference type="DisGeNET" id="2574"/>
<dbReference type="DisGeNET" id="645037"/>
<dbReference type="GeneCards" id="GAGE2B"/>
<dbReference type="GeneCards" id="GAGE2C"/>
<dbReference type="HGNC" id="HGNC:31957">
    <property type="gene designation" value="GAGE2B"/>
</dbReference>
<dbReference type="HGNC" id="HGNC:31958">
    <property type="gene designation" value="GAGE2C"/>
</dbReference>
<dbReference type="MIM" id="300595">
    <property type="type" value="gene"/>
</dbReference>
<dbReference type="MIM" id="300726">
    <property type="type" value="gene"/>
</dbReference>
<dbReference type="neXtProt" id="NX_Q13066"/>
<dbReference type="PharmGKB" id="PA162389260"/>
<dbReference type="InParanoid" id="Q13066"/>
<dbReference type="OrthoDB" id="9539459at2759"/>
<dbReference type="PAN-GO" id="Q13066">
    <property type="GO annotations" value="0 GO annotations based on evolutionary models"/>
</dbReference>
<dbReference type="PhylomeDB" id="Q13066"/>
<dbReference type="TreeFam" id="TF340669"/>
<dbReference type="PathwayCommons" id="Q13066"/>
<dbReference type="SignaLink" id="Q13066"/>
<dbReference type="BioGRID-ORCS" id="2574">
    <property type="hits" value="1 hit in 39 CRISPR screens"/>
</dbReference>
<dbReference type="BioGRID-ORCS" id="645037">
    <property type="hits" value="6 hits in 117 CRISPR screens"/>
</dbReference>
<dbReference type="Pharos" id="Q13066">
    <property type="development level" value="Tdark"/>
</dbReference>
<dbReference type="PRO" id="PR:Q13066"/>
<dbReference type="Proteomes" id="UP000005640">
    <property type="component" value="Unplaced"/>
</dbReference>
<dbReference type="RNAct" id="Q13066">
    <property type="molecule type" value="protein"/>
</dbReference>
<dbReference type="InterPro" id="IPR031320">
    <property type="entry name" value="GAGE"/>
</dbReference>
<dbReference type="InterPro" id="IPR008625">
    <property type="entry name" value="GAGE_fam"/>
</dbReference>
<dbReference type="PANTHER" id="PTHR14047:SF30">
    <property type="entry name" value="G ANTIGEN 1-RELATED"/>
    <property type="match status" value="1"/>
</dbReference>
<dbReference type="PANTHER" id="PTHR14047">
    <property type="entry name" value="P ANTIGEN FAMILY MEMBER 5-RELATED"/>
    <property type="match status" value="1"/>
</dbReference>
<dbReference type="Pfam" id="PF05831">
    <property type="entry name" value="GAGE"/>
    <property type="match status" value="1"/>
</dbReference>
<dbReference type="SMART" id="SM01379">
    <property type="entry name" value="GAGE"/>
    <property type="match status" value="1"/>
</dbReference>
<comment type="function">
    <text>Antigen, recognized on melanoma by autologous cytolytic T-lymphocytes.</text>
</comment>
<comment type="interaction">
    <interactant intactId="EBI-12329121">
        <id>Q13066</id>
    </interactant>
    <interactant intactId="EBI-2548508">
        <id>Q96IK5</id>
        <label>GMCL1</label>
    </interactant>
    <organismsDiffer>false</organismsDiffer>
    <experiments>6</experiments>
</comment>
<comment type="interaction">
    <interactant intactId="EBI-12329121">
        <id>Q13066</id>
    </interactant>
    <interactant intactId="EBI-744239">
        <id>Q14749</id>
        <label>GNMT</label>
    </interactant>
    <organismsDiffer>false</organismsDiffer>
    <experiments>3</experiments>
</comment>
<comment type="tissue specificity">
    <text evidence="2">Expressed in a variety of tumor tissues but not in normal tissues, except testis.</text>
</comment>
<comment type="miscellaneous">
    <text>This gene belongs to a family of genes organized in clustered repeats. They have a high degree of predicted sequence identity, but differ by scattered single nucleotide substitution. Their sequences contain either the antigenic peptide YYWPRPRRY or YRPRPRRY which is recognized by cytotoxic T-cells.</text>
</comment>
<comment type="similarity">
    <text evidence="3">Belongs to the GAGE family.</text>
</comment>
<comment type="caution">
    <text evidence="3">The first GAGE nomenclature was based on identified mRNA sequences, but the high identity of the GAGE members made impossible to separate products of paralogous genes from polymorph products. PubMed:18179644 presented a new GAGE gene nomenclature based on the identified genes and their products.</text>
</comment>
<sequence>MSWRGRSTYRPRPRRYVEPPEMIGPMRPEQFSDEVEPATPEEGEPATQRQDPAAAQEGEDEGASAGQGPKPEAHSQEQGHPQTGCECEDGPDGQEMDPPNPEEVKTPEEGEKQSQC</sequence>